<comment type="function">
    <text evidence="1">Core subunit of the mitochondrial membrane respiratory chain NADH dehydrogenase (Complex I) which catalyzes electron transfer from NADH through the respiratory chain, using ubiquinone as an electron acceptor. Part of the enzyme membrane arm which is embedded in the lipid bilayer and involved in proton translocation.</text>
</comment>
<comment type="catalytic activity">
    <reaction evidence="1">
        <text>a ubiquinone + NADH + 5 H(+)(in) = a ubiquinol + NAD(+) + 4 H(+)(out)</text>
        <dbReference type="Rhea" id="RHEA:29091"/>
        <dbReference type="Rhea" id="RHEA-COMP:9565"/>
        <dbReference type="Rhea" id="RHEA-COMP:9566"/>
        <dbReference type="ChEBI" id="CHEBI:15378"/>
        <dbReference type="ChEBI" id="CHEBI:16389"/>
        <dbReference type="ChEBI" id="CHEBI:17976"/>
        <dbReference type="ChEBI" id="CHEBI:57540"/>
        <dbReference type="ChEBI" id="CHEBI:57945"/>
        <dbReference type="EC" id="7.1.1.2"/>
    </reaction>
    <physiologicalReaction direction="left-to-right" evidence="1">
        <dbReference type="Rhea" id="RHEA:29092"/>
    </physiologicalReaction>
</comment>
<comment type="subunit">
    <text evidence="2">Core subunit of respiratory chain NADH dehydrogenase (Complex I) which is composed of 45 different subunits.</text>
</comment>
<comment type="subcellular location">
    <subcellularLocation>
        <location evidence="2">Mitochondrion inner membrane</location>
        <topology evidence="3">Multi-pass membrane protein</topology>
    </subcellularLocation>
</comment>
<comment type="similarity">
    <text evidence="4">Belongs to the complex I subunit 4L family.</text>
</comment>
<proteinExistence type="inferred from homology"/>
<reference key="1">
    <citation type="submission" date="2005-01" db="EMBL/GenBank/DDBJ databases">
        <authorList>
            <person name="Penny D."/>
            <person name="McLenachan P."/>
        </authorList>
    </citation>
    <scope>NUCLEOTIDE SEQUENCE [GENOMIC DNA]</scope>
</reference>
<geneLocation type="mitochondrion"/>
<protein>
    <recommendedName>
        <fullName>NADH-ubiquinone oxidoreductase chain 4L</fullName>
        <ecNumber>7.1.1.2</ecNumber>
    </recommendedName>
    <alternativeName>
        <fullName>NADH dehydrogenase subunit 4L</fullName>
    </alternativeName>
</protein>
<organism>
    <name type="scientific">Herpestes javanicus</name>
    <name type="common">Small Indian mongoose</name>
    <name type="synonym">Urva javanica</name>
    <dbReference type="NCBI Taxonomy" id="140016"/>
    <lineage>
        <taxon>Eukaryota</taxon>
        <taxon>Metazoa</taxon>
        <taxon>Chordata</taxon>
        <taxon>Craniata</taxon>
        <taxon>Vertebrata</taxon>
        <taxon>Euteleostomi</taxon>
        <taxon>Mammalia</taxon>
        <taxon>Eutheria</taxon>
        <taxon>Laurasiatheria</taxon>
        <taxon>Carnivora</taxon>
        <taxon>Feliformia</taxon>
        <taxon>Herpestidae</taxon>
        <taxon>Urva</taxon>
    </lineage>
</organism>
<name>NU4LM_HERJA</name>
<sequence>MSIVYINIFLAFIMSLLGMLIYRSHLMSSLLCLEGMMLSLFVMITLIILNNHFTLASMTPIILLVFAACEAALGLSLLVMVSNTYGNDYVQNLNLLQC</sequence>
<feature type="chain" id="PRO_0000275027" description="NADH-ubiquinone oxidoreductase chain 4L">
    <location>
        <begin position="1"/>
        <end position="98"/>
    </location>
</feature>
<feature type="transmembrane region" description="Helical" evidence="3">
    <location>
        <begin position="1"/>
        <end position="21"/>
    </location>
</feature>
<feature type="transmembrane region" description="Helical" evidence="3">
    <location>
        <begin position="29"/>
        <end position="49"/>
    </location>
</feature>
<feature type="transmembrane region" description="Helical" evidence="3">
    <location>
        <begin position="61"/>
        <end position="81"/>
    </location>
</feature>
<evidence type="ECO:0000250" key="1">
    <source>
        <dbReference type="UniProtKB" id="P03901"/>
    </source>
</evidence>
<evidence type="ECO:0000250" key="2">
    <source>
        <dbReference type="UniProtKB" id="P03902"/>
    </source>
</evidence>
<evidence type="ECO:0000255" key="3"/>
<evidence type="ECO:0000305" key="4"/>
<keyword id="KW-0249">Electron transport</keyword>
<keyword id="KW-0472">Membrane</keyword>
<keyword id="KW-0496">Mitochondrion</keyword>
<keyword id="KW-0999">Mitochondrion inner membrane</keyword>
<keyword id="KW-0520">NAD</keyword>
<keyword id="KW-0679">Respiratory chain</keyword>
<keyword id="KW-1278">Translocase</keyword>
<keyword id="KW-0812">Transmembrane</keyword>
<keyword id="KW-1133">Transmembrane helix</keyword>
<keyword id="KW-0813">Transport</keyword>
<keyword id="KW-0830">Ubiquinone</keyword>
<gene>
    <name type="primary">MT-ND4L</name>
    <name type="synonym">MTND4L</name>
    <name type="synonym">NADH4L</name>
    <name type="synonym">ND4L</name>
</gene>
<accession>Q5I195</accession>
<dbReference type="EC" id="7.1.1.2"/>
<dbReference type="EMBL" id="AY873843">
    <property type="protein sequence ID" value="AAW32556.1"/>
    <property type="molecule type" value="Genomic_DNA"/>
</dbReference>
<dbReference type="RefSeq" id="YP_203285.1">
    <property type="nucleotide sequence ID" value="NC_006835.1"/>
</dbReference>
<dbReference type="SMR" id="Q5I195"/>
<dbReference type="GeneID" id="3260244"/>
<dbReference type="CTD" id="4539"/>
<dbReference type="GO" id="GO:0005743">
    <property type="term" value="C:mitochondrial inner membrane"/>
    <property type="evidence" value="ECO:0000250"/>
    <property type="project" value="UniProtKB"/>
</dbReference>
<dbReference type="GO" id="GO:0045271">
    <property type="term" value="C:respiratory chain complex I"/>
    <property type="evidence" value="ECO:0000250"/>
    <property type="project" value="UniProtKB"/>
</dbReference>
<dbReference type="GO" id="GO:0008137">
    <property type="term" value="F:NADH dehydrogenase (ubiquinone) activity"/>
    <property type="evidence" value="ECO:0000250"/>
    <property type="project" value="UniProtKB"/>
</dbReference>
<dbReference type="GO" id="GO:0042773">
    <property type="term" value="P:ATP synthesis coupled electron transport"/>
    <property type="evidence" value="ECO:0007669"/>
    <property type="project" value="InterPro"/>
</dbReference>
<dbReference type="FunFam" id="1.10.287.3510:FF:000002">
    <property type="entry name" value="NADH-ubiquinone oxidoreductase chain 4L"/>
    <property type="match status" value="1"/>
</dbReference>
<dbReference type="Gene3D" id="1.10.287.3510">
    <property type="match status" value="1"/>
</dbReference>
<dbReference type="InterPro" id="IPR001133">
    <property type="entry name" value="NADH_UbQ_OxRdtase_chain4L/K"/>
</dbReference>
<dbReference type="InterPro" id="IPR039428">
    <property type="entry name" value="NUOK/Mnh_C1-like"/>
</dbReference>
<dbReference type="PANTHER" id="PTHR11434:SF0">
    <property type="entry name" value="NADH-UBIQUINONE OXIDOREDUCTASE CHAIN 4L"/>
    <property type="match status" value="1"/>
</dbReference>
<dbReference type="PANTHER" id="PTHR11434">
    <property type="entry name" value="NADH-UBIQUINONE OXIDOREDUCTASE SUBUNIT ND4L"/>
    <property type="match status" value="1"/>
</dbReference>
<dbReference type="Pfam" id="PF00420">
    <property type="entry name" value="Oxidored_q2"/>
    <property type="match status" value="1"/>
</dbReference>